<comment type="function">
    <text evidence="1">NDH-1 shuttles electrons from NADH, via FMN and iron-sulfur (Fe-S) centers, to quinones in the respiratory chain. The immediate electron acceptor for the enzyme in this species is believed to be ubiquinone. Couples the redox reaction to proton translocation (for every two electrons transferred, four hydrogen ions are translocated across the cytoplasmic membrane), and thus conserves the redox energy in a proton gradient.</text>
</comment>
<comment type="catalytic activity">
    <reaction evidence="1">
        <text>a quinone + NADH + 5 H(+)(in) = a quinol + NAD(+) + 4 H(+)(out)</text>
        <dbReference type="Rhea" id="RHEA:57888"/>
        <dbReference type="ChEBI" id="CHEBI:15378"/>
        <dbReference type="ChEBI" id="CHEBI:24646"/>
        <dbReference type="ChEBI" id="CHEBI:57540"/>
        <dbReference type="ChEBI" id="CHEBI:57945"/>
        <dbReference type="ChEBI" id="CHEBI:132124"/>
    </reaction>
</comment>
<comment type="cofactor">
    <cofactor evidence="1">
        <name>[4Fe-4S] cluster</name>
        <dbReference type="ChEBI" id="CHEBI:49883"/>
    </cofactor>
    <text evidence="1">Binds 2 [4Fe-4S] clusters per subunit.</text>
</comment>
<comment type="subunit">
    <text evidence="1">NDH-1 is composed of 14 different subunits. Subunits NuoA, H, J, K, L, M, N constitute the membrane sector of the complex.</text>
</comment>
<comment type="subcellular location">
    <subcellularLocation>
        <location evidence="1">Cell inner membrane</location>
        <topology evidence="1">Peripheral membrane protein</topology>
    </subcellularLocation>
</comment>
<comment type="similarity">
    <text evidence="1">Belongs to the complex I 23 kDa subunit family.</text>
</comment>
<comment type="sequence caution" evidence="2">
    <conflict type="erroneous initiation">
        <sequence resource="EMBL-CDS" id="AAO90937"/>
    </conflict>
</comment>
<dbReference type="EC" id="7.1.1.-" evidence="1"/>
<dbReference type="EMBL" id="AE016828">
    <property type="protein sequence ID" value="AAO90937.2"/>
    <property type="status" value="ALT_INIT"/>
    <property type="molecule type" value="Genomic_DNA"/>
</dbReference>
<dbReference type="RefSeq" id="NP_820423.3">
    <property type="nucleotide sequence ID" value="NC_002971.4"/>
</dbReference>
<dbReference type="RefSeq" id="WP_012220660.1">
    <property type="nucleotide sequence ID" value="NC_002971.4"/>
</dbReference>
<dbReference type="SMR" id="Q83BR3"/>
<dbReference type="STRING" id="227377.CBU_1440"/>
<dbReference type="EnsemblBacteria" id="AAO90937">
    <property type="protein sequence ID" value="AAO90937"/>
    <property type="gene ID" value="CBU_1440"/>
</dbReference>
<dbReference type="GeneID" id="1209347"/>
<dbReference type="KEGG" id="cbu:CBU_1440"/>
<dbReference type="PATRIC" id="fig|227377.7.peg.1439"/>
<dbReference type="eggNOG" id="COG1143">
    <property type="taxonomic scope" value="Bacteria"/>
</dbReference>
<dbReference type="HOGENOM" id="CLU_067218_5_1_6"/>
<dbReference type="OrthoDB" id="9808559at2"/>
<dbReference type="Proteomes" id="UP000002671">
    <property type="component" value="Chromosome"/>
</dbReference>
<dbReference type="GO" id="GO:0005886">
    <property type="term" value="C:plasma membrane"/>
    <property type="evidence" value="ECO:0007669"/>
    <property type="project" value="UniProtKB-SubCell"/>
</dbReference>
<dbReference type="GO" id="GO:0045271">
    <property type="term" value="C:respiratory chain complex I"/>
    <property type="evidence" value="ECO:0000318"/>
    <property type="project" value="GO_Central"/>
</dbReference>
<dbReference type="GO" id="GO:0051539">
    <property type="term" value="F:4 iron, 4 sulfur cluster binding"/>
    <property type="evidence" value="ECO:0007669"/>
    <property type="project" value="UniProtKB-KW"/>
</dbReference>
<dbReference type="GO" id="GO:0005506">
    <property type="term" value="F:iron ion binding"/>
    <property type="evidence" value="ECO:0007669"/>
    <property type="project" value="UniProtKB-UniRule"/>
</dbReference>
<dbReference type="GO" id="GO:0050136">
    <property type="term" value="F:NADH:ubiquinone reductase (non-electrogenic) activity"/>
    <property type="evidence" value="ECO:0007669"/>
    <property type="project" value="UniProtKB-UniRule"/>
</dbReference>
<dbReference type="GO" id="GO:0048038">
    <property type="term" value="F:quinone binding"/>
    <property type="evidence" value="ECO:0007669"/>
    <property type="project" value="UniProtKB-KW"/>
</dbReference>
<dbReference type="GO" id="GO:0009060">
    <property type="term" value="P:aerobic respiration"/>
    <property type="evidence" value="ECO:0000318"/>
    <property type="project" value="GO_Central"/>
</dbReference>
<dbReference type="FunFam" id="3.30.70.3270:FF:000003">
    <property type="entry name" value="NADH-quinone oxidoreductase subunit I"/>
    <property type="match status" value="1"/>
</dbReference>
<dbReference type="Gene3D" id="3.30.70.3270">
    <property type="match status" value="1"/>
</dbReference>
<dbReference type="HAMAP" id="MF_01351">
    <property type="entry name" value="NDH1_NuoI"/>
    <property type="match status" value="1"/>
</dbReference>
<dbReference type="InterPro" id="IPR017896">
    <property type="entry name" value="4Fe4S_Fe-S-bd"/>
</dbReference>
<dbReference type="InterPro" id="IPR017900">
    <property type="entry name" value="4Fe4S_Fe_S_CS"/>
</dbReference>
<dbReference type="InterPro" id="IPR010226">
    <property type="entry name" value="NADH_quinone_OxRdtase_chainI"/>
</dbReference>
<dbReference type="NCBIfam" id="TIGR01971">
    <property type="entry name" value="NuoI"/>
    <property type="match status" value="1"/>
</dbReference>
<dbReference type="NCBIfam" id="NF004538">
    <property type="entry name" value="PRK05888.1-4"/>
    <property type="match status" value="1"/>
</dbReference>
<dbReference type="NCBIfam" id="NF004539">
    <property type="entry name" value="PRK05888.1-5"/>
    <property type="match status" value="1"/>
</dbReference>
<dbReference type="PANTHER" id="PTHR10849:SF20">
    <property type="entry name" value="NADH DEHYDROGENASE [UBIQUINONE] IRON-SULFUR PROTEIN 8, MITOCHONDRIAL"/>
    <property type="match status" value="1"/>
</dbReference>
<dbReference type="PANTHER" id="PTHR10849">
    <property type="entry name" value="NADH DEHYDROGENASE UBIQUINONE IRON-SULFUR PROTEIN 8, MITOCHONDRIAL"/>
    <property type="match status" value="1"/>
</dbReference>
<dbReference type="Pfam" id="PF12838">
    <property type="entry name" value="Fer4_7"/>
    <property type="match status" value="1"/>
</dbReference>
<dbReference type="SUPFAM" id="SSF46548">
    <property type="entry name" value="alpha-helical ferredoxin"/>
    <property type="match status" value="1"/>
</dbReference>
<dbReference type="PROSITE" id="PS00198">
    <property type="entry name" value="4FE4S_FER_1"/>
    <property type="match status" value="2"/>
</dbReference>
<dbReference type="PROSITE" id="PS51379">
    <property type="entry name" value="4FE4S_FER_2"/>
    <property type="match status" value="2"/>
</dbReference>
<keyword id="KW-0004">4Fe-4S</keyword>
<keyword id="KW-0997">Cell inner membrane</keyword>
<keyword id="KW-1003">Cell membrane</keyword>
<keyword id="KW-0408">Iron</keyword>
<keyword id="KW-0411">Iron-sulfur</keyword>
<keyword id="KW-0472">Membrane</keyword>
<keyword id="KW-0479">Metal-binding</keyword>
<keyword id="KW-0520">NAD</keyword>
<keyword id="KW-0874">Quinone</keyword>
<keyword id="KW-1185">Reference proteome</keyword>
<keyword id="KW-0677">Repeat</keyword>
<keyword id="KW-1278">Translocase</keyword>
<keyword id="KW-0830">Ubiquinone</keyword>
<organism>
    <name type="scientific">Coxiella burnetii (strain RSA 493 / Nine Mile phase I)</name>
    <dbReference type="NCBI Taxonomy" id="227377"/>
    <lineage>
        <taxon>Bacteria</taxon>
        <taxon>Pseudomonadati</taxon>
        <taxon>Pseudomonadota</taxon>
        <taxon>Gammaproteobacteria</taxon>
        <taxon>Legionellales</taxon>
        <taxon>Coxiellaceae</taxon>
        <taxon>Coxiella</taxon>
    </lineage>
</organism>
<feature type="chain" id="PRO_0000250899" description="NADH-quinone oxidoreductase subunit I">
    <location>
        <begin position="1"/>
        <end position="163"/>
    </location>
</feature>
<feature type="domain" description="4Fe-4S ferredoxin-type 1" evidence="1">
    <location>
        <begin position="53"/>
        <end position="83"/>
    </location>
</feature>
<feature type="domain" description="4Fe-4S ferredoxin-type 2" evidence="1">
    <location>
        <begin position="94"/>
        <end position="123"/>
    </location>
</feature>
<feature type="binding site" evidence="1">
    <location>
        <position position="63"/>
    </location>
    <ligand>
        <name>[4Fe-4S] cluster</name>
        <dbReference type="ChEBI" id="CHEBI:49883"/>
        <label>1</label>
    </ligand>
</feature>
<feature type="binding site" evidence="1">
    <location>
        <position position="66"/>
    </location>
    <ligand>
        <name>[4Fe-4S] cluster</name>
        <dbReference type="ChEBI" id="CHEBI:49883"/>
        <label>1</label>
    </ligand>
</feature>
<feature type="binding site" evidence="1">
    <location>
        <position position="69"/>
    </location>
    <ligand>
        <name>[4Fe-4S] cluster</name>
        <dbReference type="ChEBI" id="CHEBI:49883"/>
        <label>1</label>
    </ligand>
</feature>
<feature type="binding site" evidence="1">
    <location>
        <position position="73"/>
    </location>
    <ligand>
        <name>[4Fe-4S] cluster</name>
        <dbReference type="ChEBI" id="CHEBI:49883"/>
        <label>2</label>
    </ligand>
</feature>
<feature type="binding site" evidence="1">
    <location>
        <position position="103"/>
    </location>
    <ligand>
        <name>[4Fe-4S] cluster</name>
        <dbReference type="ChEBI" id="CHEBI:49883"/>
        <label>2</label>
    </ligand>
</feature>
<feature type="binding site" evidence="1">
    <location>
        <position position="106"/>
    </location>
    <ligand>
        <name>[4Fe-4S] cluster</name>
        <dbReference type="ChEBI" id="CHEBI:49883"/>
        <label>2</label>
    </ligand>
</feature>
<feature type="binding site" evidence="1">
    <location>
        <position position="109"/>
    </location>
    <ligand>
        <name>[4Fe-4S] cluster</name>
        <dbReference type="ChEBI" id="CHEBI:49883"/>
        <label>2</label>
    </ligand>
</feature>
<feature type="binding site" evidence="1">
    <location>
        <position position="113"/>
    </location>
    <ligand>
        <name>[4Fe-4S] cluster</name>
        <dbReference type="ChEBI" id="CHEBI:49883"/>
        <label>1</label>
    </ligand>
</feature>
<gene>
    <name evidence="1" type="primary">nuoI</name>
    <name type="ordered locus">CBU_1440</name>
</gene>
<name>NUOI_COXBU</name>
<sequence>MRRLKQIIKSFTLWELLKGLSLTLRYFYRKKVTIHYPDEEVPSSFRFRGMLALRRYPNGEERCIACKLCEAVCPACAITIEAGPREADGSRRTTLYDIDAFKCINCGFCEEACPVDAIVLTPEMHYSIKDRGENILTKEKLLMIGDRYEEQIARDRAKDKKYR</sequence>
<protein>
    <recommendedName>
        <fullName evidence="1">NADH-quinone oxidoreductase subunit I</fullName>
        <ecNumber evidence="1">7.1.1.-</ecNumber>
    </recommendedName>
    <alternativeName>
        <fullName evidence="1">NADH dehydrogenase I subunit I</fullName>
    </alternativeName>
    <alternativeName>
        <fullName evidence="1">NDH-1 subunit I</fullName>
    </alternativeName>
</protein>
<evidence type="ECO:0000255" key="1">
    <source>
        <dbReference type="HAMAP-Rule" id="MF_01351"/>
    </source>
</evidence>
<evidence type="ECO:0000305" key="2"/>
<proteinExistence type="inferred from homology"/>
<reference key="1">
    <citation type="journal article" date="2003" name="Proc. Natl. Acad. Sci. U.S.A.">
        <title>Complete genome sequence of the Q-fever pathogen, Coxiella burnetii.</title>
        <authorList>
            <person name="Seshadri R."/>
            <person name="Paulsen I.T."/>
            <person name="Eisen J.A."/>
            <person name="Read T.D."/>
            <person name="Nelson K.E."/>
            <person name="Nelson W.C."/>
            <person name="Ward N.L."/>
            <person name="Tettelin H."/>
            <person name="Davidsen T.M."/>
            <person name="Beanan M.J."/>
            <person name="DeBoy R.T."/>
            <person name="Daugherty S.C."/>
            <person name="Brinkac L.M."/>
            <person name="Madupu R."/>
            <person name="Dodson R.J."/>
            <person name="Khouri H.M."/>
            <person name="Lee K.H."/>
            <person name="Carty H.A."/>
            <person name="Scanlan D."/>
            <person name="Heinzen R.A."/>
            <person name="Thompson H.A."/>
            <person name="Samuel J.E."/>
            <person name="Fraser C.M."/>
            <person name="Heidelberg J.F."/>
        </authorList>
    </citation>
    <scope>NUCLEOTIDE SEQUENCE [LARGE SCALE GENOMIC DNA]</scope>
    <source>
        <strain>RSA 493 / Nine Mile phase I</strain>
    </source>
</reference>
<accession>Q83BR3</accession>